<keyword id="KW-0067">ATP-binding</keyword>
<keyword id="KW-0319">Glycerol metabolism</keyword>
<keyword id="KW-0418">Kinase</keyword>
<keyword id="KW-0547">Nucleotide-binding</keyword>
<keyword id="KW-0808">Transferase</keyword>
<gene>
    <name evidence="1" type="primary">glpK</name>
    <name type="ordered locus">GM21_0870</name>
</gene>
<comment type="function">
    <text evidence="1">Key enzyme in the regulation of glycerol uptake and metabolism. Catalyzes the phosphorylation of glycerol to yield sn-glycerol 3-phosphate.</text>
</comment>
<comment type="catalytic activity">
    <reaction evidence="1">
        <text>glycerol + ATP = sn-glycerol 3-phosphate + ADP + H(+)</text>
        <dbReference type="Rhea" id="RHEA:21644"/>
        <dbReference type="ChEBI" id="CHEBI:15378"/>
        <dbReference type="ChEBI" id="CHEBI:17754"/>
        <dbReference type="ChEBI" id="CHEBI:30616"/>
        <dbReference type="ChEBI" id="CHEBI:57597"/>
        <dbReference type="ChEBI" id="CHEBI:456216"/>
        <dbReference type="EC" id="2.7.1.30"/>
    </reaction>
</comment>
<comment type="activity regulation">
    <text evidence="1">Inhibited by fructose 1,6-bisphosphate (FBP).</text>
</comment>
<comment type="pathway">
    <text evidence="1">Polyol metabolism; glycerol degradation via glycerol kinase pathway; sn-glycerol 3-phosphate from glycerol: step 1/1.</text>
</comment>
<comment type="similarity">
    <text evidence="1">Belongs to the FGGY kinase family.</text>
</comment>
<protein>
    <recommendedName>
        <fullName evidence="1">Glycerol kinase</fullName>
        <ecNumber evidence="1">2.7.1.30</ecNumber>
    </recommendedName>
    <alternativeName>
        <fullName evidence="1">ATP:glycerol 3-phosphotransferase</fullName>
    </alternativeName>
    <alternativeName>
        <fullName evidence="1">Glycerokinase</fullName>
        <shortName evidence="1">GK</shortName>
    </alternativeName>
</protein>
<organism>
    <name type="scientific">Geobacter sp. (strain M21)</name>
    <dbReference type="NCBI Taxonomy" id="443144"/>
    <lineage>
        <taxon>Bacteria</taxon>
        <taxon>Pseudomonadati</taxon>
        <taxon>Thermodesulfobacteriota</taxon>
        <taxon>Desulfuromonadia</taxon>
        <taxon>Geobacterales</taxon>
        <taxon>Geobacteraceae</taxon>
        <taxon>Geobacter</taxon>
    </lineage>
</organism>
<proteinExistence type="inferred from homology"/>
<dbReference type="EC" id="2.7.1.30" evidence="1"/>
<dbReference type="EMBL" id="CP001661">
    <property type="protein sequence ID" value="ACT16937.1"/>
    <property type="molecule type" value="Genomic_DNA"/>
</dbReference>
<dbReference type="SMR" id="C6E1L8"/>
<dbReference type="STRING" id="443144.GM21_0870"/>
<dbReference type="KEGG" id="gem:GM21_0870"/>
<dbReference type="eggNOG" id="COG0554">
    <property type="taxonomic scope" value="Bacteria"/>
</dbReference>
<dbReference type="HOGENOM" id="CLU_009281_2_3_7"/>
<dbReference type="OrthoDB" id="9805576at2"/>
<dbReference type="UniPathway" id="UPA00618">
    <property type="reaction ID" value="UER00672"/>
</dbReference>
<dbReference type="GO" id="GO:0005829">
    <property type="term" value="C:cytosol"/>
    <property type="evidence" value="ECO:0007669"/>
    <property type="project" value="TreeGrafter"/>
</dbReference>
<dbReference type="GO" id="GO:0005524">
    <property type="term" value="F:ATP binding"/>
    <property type="evidence" value="ECO:0007669"/>
    <property type="project" value="UniProtKB-UniRule"/>
</dbReference>
<dbReference type="GO" id="GO:0004370">
    <property type="term" value="F:glycerol kinase activity"/>
    <property type="evidence" value="ECO:0000250"/>
    <property type="project" value="UniProtKB"/>
</dbReference>
<dbReference type="GO" id="GO:0019563">
    <property type="term" value="P:glycerol catabolic process"/>
    <property type="evidence" value="ECO:0007669"/>
    <property type="project" value="UniProtKB-UniRule"/>
</dbReference>
<dbReference type="GO" id="GO:0006071">
    <property type="term" value="P:glycerol metabolic process"/>
    <property type="evidence" value="ECO:0000250"/>
    <property type="project" value="UniProtKB"/>
</dbReference>
<dbReference type="GO" id="GO:0006072">
    <property type="term" value="P:glycerol-3-phosphate metabolic process"/>
    <property type="evidence" value="ECO:0007669"/>
    <property type="project" value="InterPro"/>
</dbReference>
<dbReference type="CDD" id="cd07786">
    <property type="entry name" value="FGGY_EcGK_like"/>
    <property type="match status" value="1"/>
</dbReference>
<dbReference type="FunFam" id="3.30.420.40:FF:000007">
    <property type="entry name" value="Glycerol kinase"/>
    <property type="match status" value="1"/>
</dbReference>
<dbReference type="FunFam" id="3.30.420.40:FF:000008">
    <property type="entry name" value="Glycerol kinase"/>
    <property type="match status" value="1"/>
</dbReference>
<dbReference type="Gene3D" id="3.30.420.40">
    <property type="match status" value="2"/>
</dbReference>
<dbReference type="HAMAP" id="MF_00186">
    <property type="entry name" value="Glycerol_kin"/>
    <property type="match status" value="1"/>
</dbReference>
<dbReference type="InterPro" id="IPR043129">
    <property type="entry name" value="ATPase_NBD"/>
</dbReference>
<dbReference type="InterPro" id="IPR000577">
    <property type="entry name" value="Carb_kinase_FGGY"/>
</dbReference>
<dbReference type="InterPro" id="IPR018483">
    <property type="entry name" value="Carb_kinase_FGGY_CS"/>
</dbReference>
<dbReference type="InterPro" id="IPR018485">
    <property type="entry name" value="FGGY_C"/>
</dbReference>
<dbReference type="InterPro" id="IPR018484">
    <property type="entry name" value="FGGY_N"/>
</dbReference>
<dbReference type="InterPro" id="IPR005999">
    <property type="entry name" value="Glycerol_kin"/>
</dbReference>
<dbReference type="NCBIfam" id="TIGR01311">
    <property type="entry name" value="glycerol_kin"/>
    <property type="match status" value="1"/>
</dbReference>
<dbReference type="NCBIfam" id="NF000756">
    <property type="entry name" value="PRK00047.1"/>
    <property type="match status" value="1"/>
</dbReference>
<dbReference type="PANTHER" id="PTHR10196:SF69">
    <property type="entry name" value="GLYCEROL KINASE"/>
    <property type="match status" value="1"/>
</dbReference>
<dbReference type="PANTHER" id="PTHR10196">
    <property type="entry name" value="SUGAR KINASE"/>
    <property type="match status" value="1"/>
</dbReference>
<dbReference type="Pfam" id="PF02782">
    <property type="entry name" value="FGGY_C"/>
    <property type="match status" value="1"/>
</dbReference>
<dbReference type="Pfam" id="PF00370">
    <property type="entry name" value="FGGY_N"/>
    <property type="match status" value="1"/>
</dbReference>
<dbReference type="PIRSF" id="PIRSF000538">
    <property type="entry name" value="GlpK"/>
    <property type="match status" value="1"/>
</dbReference>
<dbReference type="SUPFAM" id="SSF53067">
    <property type="entry name" value="Actin-like ATPase domain"/>
    <property type="match status" value="2"/>
</dbReference>
<dbReference type="PROSITE" id="PS00445">
    <property type="entry name" value="FGGY_KINASES_2"/>
    <property type="match status" value="1"/>
</dbReference>
<sequence length="495" mass="53055">MEYLLSIDQGTTSSRATLYAASGETLATVSRPLVQHYPNPGWVEHAAQEIWEGQLACIAEAIAKAGIAPAKVAGIGITNQRETTVVWERETGEPLHRAIVWQDRRTAELTESLKEQGLEAMVRERTGLLLDPYFSASKLSWLLDRVDGLRRRAERGEVCFGTIDSWLMFKLSGGKSHLTDISNASRTMLFNINTLEWDEELLRLFRIPRGMLPEVRGSAAGFGHTSAQVAGAEIPIAGVAGDQQAALFGQGCFAPGMAKATFGTGAFVVMNSGARLGVGDGVLSTIAWQLPGEAVQYALEGSIFIAGAAVQWLQEGLGLIASAREVEALAASVSDSAGVYFVPALSGLGTPYWDPYARGVIAGLTRGSTKAHLARAALEAIAFQTLDAIRAMEKASGIALKELRVDGGAAADNLLLQIQADLLGVPVLRPRCTESTSLGAAFLAGIGAGVLDTSAIAAQWALDRRFEPQMERNLREELHRGWQKCVRLSLGWEKN</sequence>
<name>GLPK_GEOSM</name>
<reference key="1">
    <citation type="submission" date="2009-07" db="EMBL/GenBank/DDBJ databases">
        <title>Complete sequence of Geobacter sp. M21.</title>
        <authorList>
            <consortium name="US DOE Joint Genome Institute"/>
            <person name="Lucas S."/>
            <person name="Copeland A."/>
            <person name="Lapidus A."/>
            <person name="Glavina del Rio T."/>
            <person name="Dalin E."/>
            <person name="Tice H."/>
            <person name="Bruce D."/>
            <person name="Goodwin L."/>
            <person name="Pitluck S."/>
            <person name="Saunders E."/>
            <person name="Brettin T."/>
            <person name="Detter J.C."/>
            <person name="Han C."/>
            <person name="Larimer F."/>
            <person name="Land M."/>
            <person name="Hauser L."/>
            <person name="Kyrpides N."/>
            <person name="Ovchinnikova G."/>
            <person name="Lovley D."/>
        </authorList>
    </citation>
    <scope>NUCLEOTIDE SEQUENCE [LARGE SCALE GENOMIC DNA]</scope>
    <source>
        <strain>M21</strain>
    </source>
</reference>
<accession>C6E1L8</accession>
<evidence type="ECO:0000255" key="1">
    <source>
        <dbReference type="HAMAP-Rule" id="MF_00186"/>
    </source>
</evidence>
<feature type="chain" id="PRO_1000203954" description="Glycerol kinase">
    <location>
        <begin position="1"/>
        <end position="495"/>
    </location>
</feature>
<feature type="binding site" evidence="1">
    <location>
        <position position="11"/>
    </location>
    <ligand>
        <name>ADP</name>
        <dbReference type="ChEBI" id="CHEBI:456216"/>
    </ligand>
</feature>
<feature type="binding site" evidence="1">
    <location>
        <position position="11"/>
    </location>
    <ligand>
        <name>ATP</name>
        <dbReference type="ChEBI" id="CHEBI:30616"/>
    </ligand>
</feature>
<feature type="binding site" evidence="1">
    <location>
        <position position="11"/>
    </location>
    <ligand>
        <name>sn-glycerol 3-phosphate</name>
        <dbReference type="ChEBI" id="CHEBI:57597"/>
    </ligand>
</feature>
<feature type="binding site" evidence="1">
    <location>
        <position position="12"/>
    </location>
    <ligand>
        <name>ATP</name>
        <dbReference type="ChEBI" id="CHEBI:30616"/>
    </ligand>
</feature>
<feature type="binding site" evidence="1">
    <location>
        <position position="13"/>
    </location>
    <ligand>
        <name>ATP</name>
        <dbReference type="ChEBI" id="CHEBI:30616"/>
    </ligand>
</feature>
<feature type="binding site" evidence="1">
    <location>
        <position position="15"/>
    </location>
    <ligand>
        <name>ADP</name>
        <dbReference type="ChEBI" id="CHEBI:456216"/>
    </ligand>
</feature>
<feature type="binding site" evidence="1">
    <location>
        <position position="81"/>
    </location>
    <ligand>
        <name>glycerol</name>
        <dbReference type="ChEBI" id="CHEBI:17754"/>
    </ligand>
</feature>
<feature type="binding site" evidence="1">
    <location>
        <position position="81"/>
    </location>
    <ligand>
        <name>sn-glycerol 3-phosphate</name>
        <dbReference type="ChEBI" id="CHEBI:57597"/>
    </ligand>
</feature>
<feature type="binding site" evidence="1">
    <location>
        <position position="82"/>
    </location>
    <ligand>
        <name>glycerol</name>
        <dbReference type="ChEBI" id="CHEBI:17754"/>
    </ligand>
</feature>
<feature type="binding site" evidence="1">
    <location>
        <position position="82"/>
    </location>
    <ligand>
        <name>sn-glycerol 3-phosphate</name>
        <dbReference type="ChEBI" id="CHEBI:57597"/>
    </ligand>
</feature>
<feature type="binding site" evidence="1">
    <location>
        <position position="133"/>
    </location>
    <ligand>
        <name>glycerol</name>
        <dbReference type="ChEBI" id="CHEBI:17754"/>
    </ligand>
</feature>
<feature type="binding site" evidence="1">
    <location>
        <position position="133"/>
    </location>
    <ligand>
        <name>sn-glycerol 3-phosphate</name>
        <dbReference type="ChEBI" id="CHEBI:57597"/>
    </ligand>
</feature>
<feature type="binding site" evidence="1">
    <location>
        <position position="242"/>
    </location>
    <ligand>
        <name>glycerol</name>
        <dbReference type="ChEBI" id="CHEBI:17754"/>
    </ligand>
</feature>
<feature type="binding site" evidence="1">
    <location>
        <position position="242"/>
    </location>
    <ligand>
        <name>sn-glycerol 3-phosphate</name>
        <dbReference type="ChEBI" id="CHEBI:57597"/>
    </ligand>
</feature>
<feature type="binding site" evidence="1">
    <location>
        <position position="243"/>
    </location>
    <ligand>
        <name>glycerol</name>
        <dbReference type="ChEBI" id="CHEBI:17754"/>
    </ligand>
</feature>
<feature type="binding site" evidence="1">
    <location>
        <position position="264"/>
    </location>
    <ligand>
        <name>ADP</name>
        <dbReference type="ChEBI" id="CHEBI:456216"/>
    </ligand>
</feature>
<feature type="binding site" evidence="1">
    <location>
        <position position="264"/>
    </location>
    <ligand>
        <name>ATP</name>
        <dbReference type="ChEBI" id="CHEBI:30616"/>
    </ligand>
</feature>
<feature type="binding site" evidence="1">
    <location>
        <position position="307"/>
    </location>
    <ligand>
        <name>ADP</name>
        <dbReference type="ChEBI" id="CHEBI:456216"/>
    </ligand>
</feature>
<feature type="binding site" evidence="1">
    <location>
        <position position="307"/>
    </location>
    <ligand>
        <name>ATP</name>
        <dbReference type="ChEBI" id="CHEBI:30616"/>
    </ligand>
</feature>
<feature type="binding site" evidence="1">
    <location>
        <position position="311"/>
    </location>
    <ligand>
        <name>ATP</name>
        <dbReference type="ChEBI" id="CHEBI:30616"/>
    </ligand>
</feature>
<feature type="binding site" evidence="1">
    <location>
        <position position="408"/>
    </location>
    <ligand>
        <name>ADP</name>
        <dbReference type="ChEBI" id="CHEBI:456216"/>
    </ligand>
</feature>
<feature type="binding site" evidence="1">
    <location>
        <position position="408"/>
    </location>
    <ligand>
        <name>ATP</name>
        <dbReference type="ChEBI" id="CHEBI:30616"/>
    </ligand>
</feature>